<accession>B2S660</accession>
<comment type="function">
    <text evidence="1">Binds to the 23S rRNA.</text>
</comment>
<comment type="subunit">
    <text evidence="1">Part of the 50S ribosomal subunit.</text>
</comment>
<comment type="similarity">
    <text evidence="1">Belongs to the universal ribosomal protein uL15 family.</text>
</comment>
<gene>
    <name evidence="1" type="primary">rplO</name>
    <name type="ordered locus">BAbS19_I11520</name>
</gene>
<name>RL15_BRUA1</name>
<dbReference type="EMBL" id="CP000887">
    <property type="protein sequence ID" value="ACD72657.1"/>
    <property type="molecule type" value="Genomic_DNA"/>
</dbReference>
<dbReference type="RefSeq" id="WP_002964343.1">
    <property type="nucleotide sequence ID" value="NC_010742.1"/>
</dbReference>
<dbReference type="SMR" id="B2S660"/>
<dbReference type="GeneID" id="97533543"/>
<dbReference type="KEGG" id="bmc:BAbS19_I11520"/>
<dbReference type="HOGENOM" id="CLU_055188_4_0_5"/>
<dbReference type="Proteomes" id="UP000002565">
    <property type="component" value="Chromosome 1"/>
</dbReference>
<dbReference type="GO" id="GO:0022625">
    <property type="term" value="C:cytosolic large ribosomal subunit"/>
    <property type="evidence" value="ECO:0007669"/>
    <property type="project" value="TreeGrafter"/>
</dbReference>
<dbReference type="GO" id="GO:0019843">
    <property type="term" value="F:rRNA binding"/>
    <property type="evidence" value="ECO:0007669"/>
    <property type="project" value="UniProtKB-UniRule"/>
</dbReference>
<dbReference type="GO" id="GO:0003735">
    <property type="term" value="F:structural constituent of ribosome"/>
    <property type="evidence" value="ECO:0007669"/>
    <property type="project" value="InterPro"/>
</dbReference>
<dbReference type="GO" id="GO:0006412">
    <property type="term" value="P:translation"/>
    <property type="evidence" value="ECO:0007669"/>
    <property type="project" value="UniProtKB-UniRule"/>
</dbReference>
<dbReference type="Gene3D" id="3.100.10.10">
    <property type="match status" value="1"/>
</dbReference>
<dbReference type="HAMAP" id="MF_01341">
    <property type="entry name" value="Ribosomal_uL15"/>
    <property type="match status" value="1"/>
</dbReference>
<dbReference type="InterPro" id="IPR030878">
    <property type="entry name" value="Ribosomal_uL15"/>
</dbReference>
<dbReference type="InterPro" id="IPR021131">
    <property type="entry name" value="Ribosomal_uL15/eL18"/>
</dbReference>
<dbReference type="InterPro" id="IPR036227">
    <property type="entry name" value="Ribosomal_uL15/eL18_sf"/>
</dbReference>
<dbReference type="InterPro" id="IPR005749">
    <property type="entry name" value="Ribosomal_uL15_bac-type"/>
</dbReference>
<dbReference type="InterPro" id="IPR001196">
    <property type="entry name" value="Ribosomal_uL15_CS"/>
</dbReference>
<dbReference type="NCBIfam" id="TIGR01071">
    <property type="entry name" value="rplO_bact"/>
    <property type="match status" value="1"/>
</dbReference>
<dbReference type="PANTHER" id="PTHR12934">
    <property type="entry name" value="50S RIBOSOMAL PROTEIN L15"/>
    <property type="match status" value="1"/>
</dbReference>
<dbReference type="PANTHER" id="PTHR12934:SF11">
    <property type="entry name" value="LARGE RIBOSOMAL SUBUNIT PROTEIN UL15M"/>
    <property type="match status" value="1"/>
</dbReference>
<dbReference type="Pfam" id="PF00828">
    <property type="entry name" value="Ribosomal_L27A"/>
    <property type="match status" value="1"/>
</dbReference>
<dbReference type="SUPFAM" id="SSF52080">
    <property type="entry name" value="Ribosomal proteins L15p and L18e"/>
    <property type="match status" value="1"/>
</dbReference>
<dbReference type="PROSITE" id="PS00475">
    <property type="entry name" value="RIBOSOMAL_L15"/>
    <property type="match status" value="1"/>
</dbReference>
<reference key="1">
    <citation type="journal article" date="2008" name="PLoS ONE">
        <title>Genome sequence of Brucella abortus vaccine strain S19 compared to virulent strains yields candidate virulence genes.</title>
        <authorList>
            <person name="Crasta O.R."/>
            <person name="Folkerts O."/>
            <person name="Fei Z."/>
            <person name="Mane S.P."/>
            <person name="Evans C."/>
            <person name="Martino-Catt S."/>
            <person name="Bricker B."/>
            <person name="Yu G."/>
            <person name="Du L."/>
            <person name="Sobral B.W."/>
        </authorList>
    </citation>
    <scope>NUCLEOTIDE SEQUENCE [LARGE SCALE GENOMIC DNA]</scope>
    <source>
        <strain>S19</strain>
    </source>
</reference>
<organism>
    <name type="scientific">Brucella abortus (strain S19)</name>
    <dbReference type="NCBI Taxonomy" id="430066"/>
    <lineage>
        <taxon>Bacteria</taxon>
        <taxon>Pseudomonadati</taxon>
        <taxon>Pseudomonadota</taxon>
        <taxon>Alphaproteobacteria</taxon>
        <taxon>Hyphomicrobiales</taxon>
        <taxon>Brucellaceae</taxon>
        <taxon>Brucella/Ochrobactrum group</taxon>
        <taxon>Brucella</taxon>
    </lineage>
</organism>
<protein>
    <recommendedName>
        <fullName evidence="1">Large ribosomal subunit protein uL15</fullName>
    </recommendedName>
    <alternativeName>
        <fullName evidence="3">50S ribosomal protein L15</fullName>
    </alternativeName>
</protein>
<proteinExistence type="inferred from homology"/>
<sequence length="156" mass="16245">MKLNDLRDKPGSVKARKRVGRGIGSGTGKTGGRGVKGQKSRSGVSINGFEGGQMPIYRRLPKRGFTNIFAKSFNVVSLGRIQAAIDAGKLDAKAVVNLDSLKAAGVIRRAKDGVRILSDGELKAKVAFEVAGASKAAVEKIEKAGGSIKLPEAAAE</sequence>
<evidence type="ECO:0000255" key="1">
    <source>
        <dbReference type="HAMAP-Rule" id="MF_01341"/>
    </source>
</evidence>
<evidence type="ECO:0000256" key="2">
    <source>
        <dbReference type="SAM" id="MobiDB-lite"/>
    </source>
</evidence>
<evidence type="ECO:0000305" key="3"/>
<feature type="chain" id="PRO_1000142781" description="Large ribosomal subunit protein uL15">
    <location>
        <begin position="1"/>
        <end position="156"/>
    </location>
</feature>
<feature type="region of interest" description="Disordered" evidence="2">
    <location>
        <begin position="1"/>
        <end position="44"/>
    </location>
</feature>
<feature type="compositionally biased region" description="Basic and acidic residues" evidence="2">
    <location>
        <begin position="1"/>
        <end position="11"/>
    </location>
</feature>
<feature type="compositionally biased region" description="Gly residues" evidence="2">
    <location>
        <begin position="21"/>
        <end position="35"/>
    </location>
</feature>
<keyword id="KW-0687">Ribonucleoprotein</keyword>
<keyword id="KW-0689">Ribosomal protein</keyword>
<keyword id="KW-0694">RNA-binding</keyword>
<keyword id="KW-0699">rRNA-binding</keyword>